<keyword id="KW-1185">Reference proteome</keyword>
<keyword id="KW-0687">Ribonucleoprotein</keyword>
<keyword id="KW-0689">Ribosomal protein</keyword>
<evidence type="ECO:0000305" key="1"/>
<reference key="1">
    <citation type="journal article" date="1997" name="Nature">
        <title>The complete genome sequence of the hyperthermophilic, sulphate-reducing archaeon Archaeoglobus fulgidus.</title>
        <authorList>
            <person name="Klenk H.-P."/>
            <person name="Clayton R.A."/>
            <person name="Tomb J.-F."/>
            <person name="White O."/>
            <person name="Nelson K.E."/>
            <person name="Ketchum K.A."/>
            <person name="Dodson R.J."/>
            <person name="Gwinn M.L."/>
            <person name="Hickey E.K."/>
            <person name="Peterson J.D."/>
            <person name="Richardson D.L."/>
            <person name="Kerlavage A.R."/>
            <person name="Graham D.E."/>
            <person name="Kyrpides N.C."/>
            <person name="Fleischmann R.D."/>
            <person name="Quackenbush J."/>
            <person name="Lee N.H."/>
            <person name="Sutton G.G."/>
            <person name="Gill S.R."/>
            <person name="Kirkness E.F."/>
            <person name="Dougherty B.A."/>
            <person name="McKenney K."/>
            <person name="Adams M.D."/>
            <person name="Loftus B.J."/>
            <person name="Peterson S.N."/>
            <person name="Reich C.I."/>
            <person name="McNeil L.K."/>
            <person name="Badger J.H."/>
            <person name="Glodek A."/>
            <person name="Zhou L."/>
            <person name="Overbeek R."/>
            <person name="Gocayne J.D."/>
            <person name="Weidman J.F."/>
            <person name="McDonald L.A."/>
            <person name="Utterback T.R."/>
            <person name="Cotton M.D."/>
            <person name="Spriggs T."/>
            <person name="Artiach P."/>
            <person name="Kaine B.P."/>
            <person name="Sykes S.M."/>
            <person name="Sadow P.W."/>
            <person name="D'Andrea K.P."/>
            <person name="Bowman C."/>
            <person name="Fujii C."/>
            <person name="Garland S.A."/>
            <person name="Mason T.M."/>
            <person name="Olsen G.J."/>
            <person name="Fraser C.M."/>
            <person name="Smith H.O."/>
            <person name="Woese C.R."/>
            <person name="Venter J.C."/>
        </authorList>
    </citation>
    <scope>NUCLEOTIDE SEQUENCE [LARGE SCALE GENOMIC DNA]</scope>
    <source>
        <strain>ATCC 49558 / DSM 4304 / JCM 9628 / NBRC 100126 / VC-16</strain>
    </source>
</reference>
<name>RL21_ARCFU</name>
<gene>
    <name type="primary">rpl21e</name>
    <name type="ordered locus">AF_1529</name>
</gene>
<sequence>MGWKSHGFRFKSGRKLRKKVREKGVRIRKFLQTFDVGQRVHIDIEPASQKGMPHPRFQGRTGVVIGQRGRAYLVQVRDGGKMKTLIVRPEHLKPQSG</sequence>
<comment type="similarity">
    <text evidence="1">Belongs to the eukaryotic ribosomal protein eL21 family.</text>
</comment>
<dbReference type="EMBL" id="AE000782">
    <property type="protein sequence ID" value="AAB89719.1"/>
    <property type="molecule type" value="Genomic_DNA"/>
</dbReference>
<dbReference type="PIR" id="H69440">
    <property type="entry name" value="H69440"/>
</dbReference>
<dbReference type="RefSeq" id="WP_010879026.1">
    <property type="nucleotide sequence ID" value="NC_000917.1"/>
</dbReference>
<dbReference type="SMR" id="O28743"/>
<dbReference type="STRING" id="224325.AF_1529"/>
<dbReference type="PaxDb" id="224325-AF_1529"/>
<dbReference type="EnsemblBacteria" id="AAB89719">
    <property type="protein sequence ID" value="AAB89719"/>
    <property type="gene ID" value="AF_1529"/>
</dbReference>
<dbReference type="KEGG" id="afu:AF_1529"/>
<dbReference type="eggNOG" id="arCOG04129">
    <property type="taxonomic scope" value="Archaea"/>
</dbReference>
<dbReference type="HOGENOM" id="CLU_103610_1_1_2"/>
<dbReference type="OrthoDB" id="6295at2157"/>
<dbReference type="PhylomeDB" id="O28743"/>
<dbReference type="Proteomes" id="UP000002199">
    <property type="component" value="Chromosome"/>
</dbReference>
<dbReference type="GO" id="GO:1990904">
    <property type="term" value="C:ribonucleoprotein complex"/>
    <property type="evidence" value="ECO:0007669"/>
    <property type="project" value="UniProtKB-KW"/>
</dbReference>
<dbReference type="GO" id="GO:0005840">
    <property type="term" value="C:ribosome"/>
    <property type="evidence" value="ECO:0007669"/>
    <property type="project" value="UniProtKB-KW"/>
</dbReference>
<dbReference type="GO" id="GO:0003735">
    <property type="term" value="F:structural constituent of ribosome"/>
    <property type="evidence" value="ECO:0007669"/>
    <property type="project" value="InterPro"/>
</dbReference>
<dbReference type="GO" id="GO:0006412">
    <property type="term" value="P:translation"/>
    <property type="evidence" value="ECO:0007669"/>
    <property type="project" value="UniProtKB-UniRule"/>
</dbReference>
<dbReference type="FunFam" id="2.30.30.70:FF:000001">
    <property type="entry name" value="60S ribosomal protein L21"/>
    <property type="match status" value="1"/>
</dbReference>
<dbReference type="Gene3D" id="2.30.30.70">
    <property type="entry name" value="Ribosomal protein L21"/>
    <property type="match status" value="1"/>
</dbReference>
<dbReference type="HAMAP" id="MF_00369">
    <property type="entry name" value="Ribosomal_eL21"/>
    <property type="match status" value="1"/>
</dbReference>
<dbReference type="InterPro" id="IPR001147">
    <property type="entry name" value="Ribosomal_eL21"/>
</dbReference>
<dbReference type="InterPro" id="IPR022856">
    <property type="entry name" value="Ribosomal_eL21_arc"/>
</dbReference>
<dbReference type="InterPro" id="IPR018259">
    <property type="entry name" value="Ribosomal_eL21_CS"/>
</dbReference>
<dbReference type="InterPro" id="IPR036948">
    <property type="entry name" value="Ribosomal_eL21_sf"/>
</dbReference>
<dbReference type="InterPro" id="IPR008991">
    <property type="entry name" value="Translation_prot_SH3-like_sf"/>
</dbReference>
<dbReference type="NCBIfam" id="NF003303">
    <property type="entry name" value="PRK04306.1"/>
    <property type="match status" value="1"/>
</dbReference>
<dbReference type="PANTHER" id="PTHR20981">
    <property type="entry name" value="60S RIBOSOMAL PROTEIN L21"/>
    <property type="match status" value="1"/>
</dbReference>
<dbReference type="Pfam" id="PF01157">
    <property type="entry name" value="Ribosomal_L21e"/>
    <property type="match status" value="1"/>
</dbReference>
<dbReference type="SUPFAM" id="SSF50104">
    <property type="entry name" value="Translation proteins SH3-like domain"/>
    <property type="match status" value="1"/>
</dbReference>
<dbReference type="PROSITE" id="PS01171">
    <property type="entry name" value="RIBOSOMAL_L21E"/>
    <property type="match status" value="1"/>
</dbReference>
<feature type="chain" id="PRO_0000149685" description="Large ribosomal subunit protein eL21">
    <location>
        <begin position="1"/>
        <end position="97"/>
    </location>
</feature>
<organism>
    <name type="scientific">Archaeoglobus fulgidus (strain ATCC 49558 / DSM 4304 / JCM 9628 / NBRC 100126 / VC-16)</name>
    <dbReference type="NCBI Taxonomy" id="224325"/>
    <lineage>
        <taxon>Archaea</taxon>
        <taxon>Methanobacteriati</taxon>
        <taxon>Methanobacteriota</taxon>
        <taxon>Archaeoglobi</taxon>
        <taxon>Archaeoglobales</taxon>
        <taxon>Archaeoglobaceae</taxon>
        <taxon>Archaeoglobus</taxon>
    </lineage>
</organism>
<protein>
    <recommendedName>
        <fullName evidence="1">Large ribosomal subunit protein eL21</fullName>
    </recommendedName>
    <alternativeName>
        <fullName>50S ribosomal protein L21e</fullName>
    </alternativeName>
</protein>
<accession>O28743</accession>
<proteinExistence type="inferred from homology"/>